<reference key="1">
    <citation type="journal article" date="2004" name="Nat. Genet.">
        <title>Complete sequencing and characterization of 21,243 full-length human cDNAs.</title>
        <authorList>
            <person name="Ota T."/>
            <person name="Suzuki Y."/>
            <person name="Nishikawa T."/>
            <person name="Otsuki T."/>
            <person name="Sugiyama T."/>
            <person name="Irie R."/>
            <person name="Wakamatsu A."/>
            <person name="Hayashi K."/>
            <person name="Sato H."/>
            <person name="Nagai K."/>
            <person name="Kimura K."/>
            <person name="Makita H."/>
            <person name="Sekine M."/>
            <person name="Obayashi M."/>
            <person name="Nishi T."/>
            <person name="Shibahara T."/>
            <person name="Tanaka T."/>
            <person name="Ishii S."/>
            <person name="Yamamoto J."/>
            <person name="Saito K."/>
            <person name="Kawai Y."/>
            <person name="Isono Y."/>
            <person name="Nakamura Y."/>
            <person name="Nagahari K."/>
            <person name="Murakami K."/>
            <person name="Yasuda T."/>
            <person name="Iwayanagi T."/>
            <person name="Wagatsuma M."/>
            <person name="Shiratori A."/>
            <person name="Sudo H."/>
            <person name="Hosoiri T."/>
            <person name="Kaku Y."/>
            <person name="Kodaira H."/>
            <person name="Kondo H."/>
            <person name="Sugawara M."/>
            <person name="Takahashi M."/>
            <person name="Kanda K."/>
            <person name="Yokoi T."/>
            <person name="Furuya T."/>
            <person name="Kikkawa E."/>
            <person name="Omura Y."/>
            <person name="Abe K."/>
            <person name="Kamihara K."/>
            <person name="Katsuta N."/>
            <person name="Sato K."/>
            <person name="Tanikawa M."/>
            <person name="Yamazaki M."/>
            <person name="Ninomiya K."/>
            <person name="Ishibashi T."/>
            <person name="Yamashita H."/>
            <person name="Murakawa K."/>
            <person name="Fujimori K."/>
            <person name="Tanai H."/>
            <person name="Kimata M."/>
            <person name="Watanabe M."/>
            <person name="Hiraoka S."/>
            <person name="Chiba Y."/>
            <person name="Ishida S."/>
            <person name="Ono Y."/>
            <person name="Takiguchi S."/>
            <person name="Watanabe S."/>
            <person name="Yosida M."/>
            <person name="Hotuta T."/>
            <person name="Kusano J."/>
            <person name="Kanehori K."/>
            <person name="Takahashi-Fujii A."/>
            <person name="Hara H."/>
            <person name="Tanase T.-O."/>
            <person name="Nomura Y."/>
            <person name="Togiya S."/>
            <person name="Komai F."/>
            <person name="Hara R."/>
            <person name="Takeuchi K."/>
            <person name="Arita M."/>
            <person name="Imose N."/>
            <person name="Musashino K."/>
            <person name="Yuuki H."/>
            <person name="Oshima A."/>
            <person name="Sasaki N."/>
            <person name="Aotsuka S."/>
            <person name="Yoshikawa Y."/>
            <person name="Matsunawa H."/>
            <person name="Ichihara T."/>
            <person name="Shiohata N."/>
            <person name="Sano S."/>
            <person name="Moriya S."/>
            <person name="Momiyama H."/>
            <person name="Satoh N."/>
            <person name="Takami S."/>
            <person name="Terashima Y."/>
            <person name="Suzuki O."/>
            <person name="Nakagawa S."/>
            <person name="Senoh A."/>
            <person name="Mizoguchi H."/>
            <person name="Goto Y."/>
            <person name="Shimizu F."/>
            <person name="Wakebe H."/>
            <person name="Hishigaki H."/>
            <person name="Watanabe T."/>
            <person name="Sugiyama A."/>
            <person name="Takemoto M."/>
            <person name="Kawakami B."/>
            <person name="Yamazaki M."/>
            <person name="Watanabe K."/>
            <person name="Kumagai A."/>
            <person name="Itakura S."/>
            <person name="Fukuzumi Y."/>
            <person name="Fujimori Y."/>
            <person name="Komiyama M."/>
            <person name="Tashiro H."/>
            <person name="Tanigami A."/>
            <person name="Fujiwara T."/>
            <person name="Ono T."/>
            <person name="Yamada K."/>
            <person name="Fujii Y."/>
            <person name="Ozaki K."/>
            <person name="Hirao M."/>
            <person name="Ohmori Y."/>
            <person name="Kawabata A."/>
            <person name="Hikiji T."/>
            <person name="Kobatake N."/>
            <person name="Inagaki H."/>
            <person name="Ikema Y."/>
            <person name="Okamoto S."/>
            <person name="Okitani R."/>
            <person name="Kawakami T."/>
            <person name="Noguchi S."/>
            <person name="Itoh T."/>
            <person name="Shigeta K."/>
            <person name="Senba T."/>
            <person name="Matsumura K."/>
            <person name="Nakajima Y."/>
            <person name="Mizuno T."/>
            <person name="Morinaga M."/>
            <person name="Sasaki M."/>
            <person name="Togashi T."/>
            <person name="Oyama M."/>
            <person name="Hata H."/>
            <person name="Watanabe M."/>
            <person name="Komatsu T."/>
            <person name="Mizushima-Sugano J."/>
            <person name="Satoh T."/>
            <person name="Shirai Y."/>
            <person name="Takahashi Y."/>
            <person name="Nakagawa K."/>
            <person name="Okumura K."/>
            <person name="Nagase T."/>
            <person name="Nomura N."/>
            <person name="Kikuchi H."/>
            <person name="Masuho Y."/>
            <person name="Yamashita R."/>
            <person name="Nakai K."/>
            <person name="Yada T."/>
            <person name="Nakamura Y."/>
            <person name="Ohara O."/>
            <person name="Isogai T."/>
            <person name="Sugano S."/>
        </authorList>
    </citation>
    <scope>NUCLEOTIDE SEQUENCE [LARGE SCALE MRNA] (ISOFORMS 1; 4 AND 5)</scope>
    <scope>NUCLEOTIDE SEQUENCE [LARGE SCALE MRNA] OF 67-732 (ISOFORM 3)</scope>
    <source>
        <tissue>Brain</tissue>
        <tissue>Teratocarcinoma</tissue>
        <tissue>Thalamus</tissue>
    </source>
</reference>
<reference key="2">
    <citation type="journal article" date="2005" name="Nature">
        <title>The DNA sequence of the human X chromosome.</title>
        <authorList>
            <person name="Ross M.T."/>
            <person name="Grafham D.V."/>
            <person name="Coffey A.J."/>
            <person name="Scherer S."/>
            <person name="McLay K."/>
            <person name="Muzny D."/>
            <person name="Platzer M."/>
            <person name="Howell G.R."/>
            <person name="Burrows C."/>
            <person name="Bird C.P."/>
            <person name="Frankish A."/>
            <person name="Lovell F.L."/>
            <person name="Howe K.L."/>
            <person name="Ashurst J.L."/>
            <person name="Fulton R.S."/>
            <person name="Sudbrak R."/>
            <person name="Wen G."/>
            <person name="Jones M.C."/>
            <person name="Hurles M.E."/>
            <person name="Andrews T.D."/>
            <person name="Scott C.E."/>
            <person name="Searle S."/>
            <person name="Ramser J."/>
            <person name="Whittaker A."/>
            <person name="Deadman R."/>
            <person name="Carter N.P."/>
            <person name="Hunt S.E."/>
            <person name="Chen R."/>
            <person name="Cree A."/>
            <person name="Gunaratne P."/>
            <person name="Havlak P."/>
            <person name="Hodgson A."/>
            <person name="Metzker M.L."/>
            <person name="Richards S."/>
            <person name="Scott G."/>
            <person name="Steffen D."/>
            <person name="Sodergren E."/>
            <person name="Wheeler D.A."/>
            <person name="Worley K.C."/>
            <person name="Ainscough R."/>
            <person name="Ambrose K.D."/>
            <person name="Ansari-Lari M.A."/>
            <person name="Aradhya S."/>
            <person name="Ashwell R.I."/>
            <person name="Babbage A.K."/>
            <person name="Bagguley C.L."/>
            <person name="Ballabio A."/>
            <person name="Banerjee R."/>
            <person name="Barker G.E."/>
            <person name="Barlow K.F."/>
            <person name="Barrett I.P."/>
            <person name="Bates K.N."/>
            <person name="Beare D.M."/>
            <person name="Beasley H."/>
            <person name="Beasley O."/>
            <person name="Beck A."/>
            <person name="Bethel G."/>
            <person name="Blechschmidt K."/>
            <person name="Brady N."/>
            <person name="Bray-Allen S."/>
            <person name="Bridgeman A.M."/>
            <person name="Brown A.J."/>
            <person name="Brown M.J."/>
            <person name="Bonnin D."/>
            <person name="Bruford E.A."/>
            <person name="Buhay C."/>
            <person name="Burch P."/>
            <person name="Burford D."/>
            <person name="Burgess J."/>
            <person name="Burrill W."/>
            <person name="Burton J."/>
            <person name="Bye J.M."/>
            <person name="Carder C."/>
            <person name="Carrel L."/>
            <person name="Chako J."/>
            <person name="Chapman J.C."/>
            <person name="Chavez D."/>
            <person name="Chen E."/>
            <person name="Chen G."/>
            <person name="Chen Y."/>
            <person name="Chen Z."/>
            <person name="Chinault C."/>
            <person name="Ciccodicola A."/>
            <person name="Clark S.Y."/>
            <person name="Clarke G."/>
            <person name="Clee C.M."/>
            <person name="Clegg S."/>
            <person name="Clerc-Blankenburg K."/>
            <person name="Clifford K."/>
            <person name="Cobley V."/>
            <person name="Cole C.G."/>
            <person name="Conquer J.S."/>
            <person name="Corby N."/>
            <person name="Connor R.E."/>
            <person name="David R."/>
            <person name="Davies J."/>
            <person name="Davis C."/>
            <person name="Davis J."/>
            <person name="Delgado O."/>
            <person name="Deshazo D."/>
            <person name="Dhami P."/>
            <person name="Ding Y."/>
            <person name="Dinh H."/>
            <person name="Dodsworth S."/>
            <person name="Draper H."/>
            <person name="Dugan-Rocha S."/>
            <person name="Dunham A."/>
            <person name="Dunn M."/>
            <person name="Durbin K.J."/>
            <person name="Dutta I."/>
            <person name="Eades T."/>
            <person name="Ellwood M."/>
            <person name="Emery-Cohen A."/>
            <person name="Errington H."/>
            <person name="Evans K.L."/>
            <person name="Faulkner L."/>
            <person name="Francis F."/>
            <person name="Frankland J."/>
            <person name="Fraser A.E."/>
            <person name="Galgoczy P."/>
            <person name="Gilbert J."/>
            <person name="Gill R."/>
            <person name="Gloeckner G."/>
            <person name="Gregory S.G."/>
            <person name="Gribble S."/>
            <person name="Griffiths C."/>
            <person name="Grocock R."/>
            <person name="Gu Y."/>
            <person name="Gwilliam R."/>
            <person name="Hamilton C."/>
            <person name="Hart E.A."/>
            <person name="Hawes A."/>
            <person name="Heath P.D."/>
            <person name="Heitmann K."/>
            <person name="Hennig S."/>
            <person name="Hernandez J."/>
            <person name="Hinzmann B."/>
            <person name="Ho S."/>
            <person name="Hoffs M."/>
            <person name="Howden P.J."/>
            <person name="Huckle E.J."/>
            <person name="Hume J."/>
            <person name="Hunt P.J."/>
            <person name="Hunt A.R."/>
            <person name="Isherwood J."/>
            <person name="Jacob L."/>
            <person name="Johnson D."/>
            <person name="Jones S."/>
            <person name="de Jong P.J."/>
            <person name="Joseph S.S."/>
            <person name="Keenan S."/>
            <person name="Kelly S."/>
            <person name="Kershaw J.K."/>
            <person name="Khan Z."/>
            <person name="Kioschis P."/>
            <person name="Klages S."/>
            <person name="Knights A.J."/>
            <person name="Kosiura A."/>
            <person name="Kovar-Smith C."/>
            <person name="Laird G.K."/>
            <person name="Langford C."/>
            <person name="Lawlor S."/>
            <person name="Leversha M."/>
            <person name="Lewis L."/>
            <person name="Liu W."/>
            <person name="Lloyd C."/>
            <person name="Lloyd D.M."/>
            <person name="Loulseged H."/>
            <person name="Loveland J.E."/>
            <person name="Lovell J.D."/>
            <person name="Lozado R."/>
            <person name="Lu J."/>
            <person name="Lyne R."/>
            <person name="Ma J."/>
            <person name="Maheshwari M."/>
            <person name="Matthews L.H."/>
            <person name="McDowall J."/>
            <person name="McLaren S."/>
            <person name="McMurray A."/>
            <person name="Meidl P."/>
            <person name="Meitinger T."/>
            <person name="Milne S."/>
            <person name="Miner G."/>
            <person name="Mistry S.L."/>
            <person name="Morgan M."/>
            <person name="Morris S."/>
            <person name="Mueller I."/>
            <person name="Mullikin J.C."/>
            <person name="Nguyen N."/>
            <person name="Nordsiek G."/>
            <person name="Nyakatura G."/>
            <person name="O'dell C.N."/>
            <person name="Okwuonu G."/>
            <person name="Palmer S."/>
            <person name="Pandian R."/>
            <person name="Parker D."/>
            <person name="Parrish J."/>
            <person name="Pasternak S."/>
            <person name="Patel D."/>
            <person name="Pearce A.V."/>
            <person name="Pearson D.M."/>
            <person name="Pelan S.E."/>
            <person name="Perez L."/>
            <person name="Porter K.M."/>
            <person name="Ramsey Y."/>
            <person name="Reichwald K."/>
            <person name="Rhodes S."/>
            <person name="Ridler K.A."/>
            <person name="Schlessinger D."/>
            <person name="Schueler M.G."/>
            <person name="Sehra H.K."/>
            <person name="Shaw-Smith C."/>
            <person name="Shen H."/>
            <person name="Sheridan E.M."/>
            <person name="Shownkeen R."/>
            <person name="Skuce C.D."/>
            <person name="Smith M.L."/>
            <person name="Sotheran E.C."/>
            <person name="Steingruber H.E."/>
            <person name="Steward C.A."/>
            <person name="Storey R."/>
            <person name="Swann R.M."/>
            <person name="Swarbreck D."/>
            <person name="Tabor P.E."/>
            <person name="Taudien S."/>
            <person name="Taylor T."/>
            <person name="Teague B."/>
            <person name="Thomas K."/>
            <person name="Thorpe A."/>
            <person name="Timms K."/>
            <person name="Tracey A."/>
            <person name="Trevanion S."/>
            <person name="Tromans A.C."/>
            <person name="d'Urso M."/>
            <person name="Verduzco D."/>
            <person name="Villasana D."/>
            <person name="Waldron L."/>
            <person name="Wall M."/>
            <person name="Wang Q."/>
            <person name="Warren J."/>
            <person name="Warry G.L."/>
            <person name="Wei X."/>
            <person name="West A."/>
            <person name="Whitehead S.L."/>
            <person name="Whiteley M.N."/>
            <person name="Wilkinson J.E."/>
            <person name="Willey D.L."/>
            <person name="Williams G."/>
            <person name="Williams L."/>
            <person name="Williamson A."/>
            <person name="Williamson H."/>
            <person name="Wilming L."/>
            <person name="Woodmansey R.L."/>
            <person name="Wray P.W."/>
            <person name="Yen J."/>
            <person name="Zhang J."/>
            <person name="Zhou J."/>
            <person name="Zoghbi H."/>
            <person name="Zorilla S."/>
            <person name="Buck D."/>
            <person name="Reinhardt R."/>
            <person name="Poustka A."/>
            <person name="Rosenthal A."/>
            <person name="Lehrach H."/>
            <person name="Meindl A."/>
            <person name="Minx P.J."/>
            <person name="Hillier L.W."/>
            <person name="Willard H.F."/>
            <person name="Wilson R.K."/>
            <person name="Waterston R.H."/>
            <person name="Rice C.M."/>
            <person name="Vaudin M."/>
            <person name="Coulson A."/>
            <person name="Nelson D.L."/>
            <person name="Weinstock G."/>
            <person name="Sulston J.E."/>
            <person name="Durbin R.M."/>
            <person name="Hubbard T."/>
            <person name="Gibbs R.A."/>
            <person name="Beck S."/>
            <person name="Rogers J."/>
            <person name="Bentley D.R."/>
        </authorList>
    </citation>
    <scope>NUCLEOTIDE SEQUENCE [LARGE SCALE GENOMIC DNA]</scope>
</reference>
<reference key="3">
    <citation type="journal article" date="2004" name="Genome Res.">
        <title>The status, quality, and expansion of the NIH full-length cDNA project: the Mammalian Gene Collection (MGC).</title>
        <authorList>
            <consortium name="The MGC Project Team"/>
        </authorList>
    </citation>
    <scope>NUCLEOTIDE SEQUENCE [LARGE SCALE MRNA] (ISOFORMS 1 AND 2)</scope>
    <scope>VARIANT SER-182</scope>
    <source>
        <tissue>Liver</tissue>
        <tissue>Lymph</tissue>
        <tissue>Testis</tissue>
    </source>
</reference>
<reference key="4">
    <citation type="journal article" date="2009" name="Anal. Chem.">
        <title>Lys-N and trypsin cover complementary parts of the phosphoproteome in a refined SCX-based approach.</title>
        <authorList>
            <person name="Gauci S."/>
            <person name="Helbig A.O."/>
            <person name="Slijper M."/>
            <person name="Krijgsveld J."/>
            <person name="Heck A.J."/>
            <person name="Mohammed S."/>
        </authorList>
    </citation>
    <scope>IDENTIFICATION BY MASS SPECTROMETRY [LARGE SCALE ANALYSIS]</scope>
</reference>
<reference key="5">
    <citation type="journal article" date="2009" name="Science">
        <title>Lysine acetylation targets protein complexes and co-regulates major cellular functions.</title>
        <authorList>
            <person name="Choudhary C."/>
            <person name="Kumar C."/>
            <person name="Gnad F."/>
            <person name="Nielsen M.L."/>
            <person name="Rehman M."/>
            <person name="Walther T.C."/>
            <person name="Olsen J.V."/>
            <person name="Mann M."/>
        </authorList>
    </citation>
    <scope>IDENTIFICATION BY MASS SPECTROMETRY [LARGE SCALE ANALYSIS]</scope>
</reference>
<reference key="6">
    <citation type="journal article" date="2012" name="Proc. Natl. Acad. Sci. U.S.A.">
        <title>N-terminal acetylome analyses and functional insights of the N-terminal acetyltransferase NatB.</title>
        <authorList>
            <person name="Van Damme P."/>
            <person name="Lasa M."/>
            <person name="Polevoda B."/>
            <person name="Gazquez C."/>
            <person name="Elosegui-Artola A."/>
            <person name="Kim D.S."/>
            <person name="De Juan-Pardo E."/>
            <person name="Demeyer K."/>
            <person name="Hole K."/>
            <person name="Larrea E."/>
            <person name="Timmerman E."/>
            <person name="Prieto J."/>
            <person name="Arnesen T."/>
            <person name="Sherman F."/>
            <person name="Gevaert K."/>
            <person name="Aldabe R."/>
        </authorList>
    </citation>
    <scope>ACETYLATION [LARGE SCALE ANALYSIS] AT MET-1 (ISOFORM 5)</scope>
    <scope>IDENTIFICATION BY MASS SPECTROMETRY [LARGE SCALE ANALYSIS]</scope>
</reference>
<reference key="7">
    <citation type="journal article" date="2006" name="Science">
        <title>The consensus coding sequences of human breast and colorectal cancers.</title>
        <authorList>
            <person name="Sjoeblom T."/>
            <person name="Jones S."/>
            <person name="Wood L.D."/>
            <person name="Parsons D.W."/>
            <person name="Lin J."/>
            <person name="Barber T.D."/>
            <person name="Mandelker D."/>
            <person name="Leary R.J."/>
            <person name="Ptak J."/>
            <person name="Silliman N."/>
            <person name="Szabo S."/>
            <person name="Buckhaults P."/>
            <person name="Farrell C."/>
            <person name="Meeh P."/>
            <person name="Markowitz S.D."/>
            <person name="Willis J."/>
            <person name="Dawson D."/>
            <person name="Willson J.K.V."/>
            <person name="Gazdar A.F."/>
            <person name="Hartigan J."/>
            <person name="Wu L."/>
            <person name="Liu C."/>
            <person name="Parmigiani G."/>
            <person name="Park B.H."/>
            <person name="Bachman K.E."/>
            <person name="Papadopoulos N."/>
            <person name="Vogelstein B."/>
            <person name="Kinzler K.W."/>
            <person name="Velculescu V.E."/>
        </authorList>
    </citation>
    <scope>VARIANT [LARGE SCALE ANALYSIS] PRO-32</scope>
</reference>
<reference key="8">
    <citation type="journal article" date="2019" name="Cell Rep.">
        <title>MAP7D2 Localizes to the Proximal Axon and Locally Promotes Kinesin-1-Mediated Cargo Transport into the Axon.</title>
        <authorList>
            <person name="Pan X."/>
            <person name="Cao Y."/>
            <person name="Stucchi R."/>
            <person name="Hooikaas P.J."/>
            <person name="Portegies S."/>
            <person name="Will L."/>
            <person name="Martin M."/>
            <person name="Akhmanova A."/>
            <person name="Harterink M."/>
            <person name="Hoogenraad C.C."/>
        </authorList>
    </citation>
    <scope>SUBCELLULAR LOCATION</scope>
</reference>
<evidence type="ECO:0000250" key="1">
    <source>
        <dbReference type="UniProtKB" id="A2AG50"/>
    </source>
</evidence>
<evidence type="ECO:0000250" key="2">
    <source>
        <dbReference type="UniProtKB" id="D4A4L4"/>
    </source>
</evidence>
<evidence type="ECO:0000255" key="3"/>
<evidence type="ECO:0000256" key="4">
    <source>
        <dbReference type="SAM" id="MobiDB-lite"/>
    </source>
</evidence>
<evidence type="ECO:0000269" key="5">
    <source>
    </source>
</evidence>
<evidence type="ECO:0000269" key="6">
    <source>
    </source>
</evidence>
<evidence type="ECO:0000269" key="7">
    <source>
    </source>
</evidence>
<evidence type="ECO:0000303" key="8">
    <source>
    </source>
</evidence>
<evidence type="ECO:0000303" key="9">
    <source>
    </source>
</evidence>
<evidence type="ECO:0000305" key="10"/>
<evidence type="ECO:0007744" key="11">
    <source>
    </source>
</evidence>
<gene>
    <name type="primary">MAP7D2</name>
</gene>
<organism>
    <name type="scientific">Homo sapiens</name>
    <name type="common">Human</name>
    <dbReference type="NCBI Taxonomy" id="9606"/>
    <lineage>
        <taxon>Eukaryota</taxon>
        <taxon>Metazoa</taxon>
        <taxon>Chordata</taxon>
        <taxon>Craniata</taxon>
        <taxon>Vertebrata</taxon>
        <taxon>Euteleostomi</taxon>
        <taxon>Mammalia</taxon>
        <taxon>Eutheria</taxon>
        <taxon>Euarchontoglires</taxon>
        <taxon>Primates</taxon>
        <taxon>Haplorrhini</taxon>
        <taxon>Catarrhini</taxon>
        <taxon>Hominidae</taxon>
        <taxon>Homo</taxon>
    </lineage>
</organism>
<sequence>MERGGGGSGTGSRPEGTARGTSLPGKIAEPGAVRTSQPNYRPQGMEGFLKSDERQRLAKERREEREKCLAAREQQILEKQKRARLQYEKQMEERWRKLEEQRQREDQKRAAVEEKRKQKLREEEERLEAMMRRSLERTQQLELKKKYSWGAPLAIGPGGHDACDKLSTSTMSLPKPTEPPMNKRLSSSTVAISYSPDRVFHVCPRLAPLGPLNPSYKSSPTRNIEKKKATSTSTSGAGDVGKEALSGGEASLVEKVKRGQRTATSLPVVNFGSPLRRCEFSGGIPKRPSSPVISKTATKAYPQSPKTTKPPYPGSPVKYRLPALSGQDMPKRKAEKEKSNKEREGTLAQQAAGPQGEEALEKHVVDKHASEKHAAAAGGKAENSAALGKPTAGTTDAGEAAKILAEKRRQARLQKEQEEQERLEKEEQDRLEREELKRKAEEERLRLEEEARKQEEERKRQEEEKKKQEGEEKRKAGEEAKRKAEEELLLKEKQEQEKQEKAMIEKQKEAAETKAREVAEQMRLEREQIMLQIEQERLERKKRIDEIMKRTRKSDVSPQVKKEDPKVGVQPAVCVEKKTKLVVPNKMEINGLNTCQEVNGVDHAAPETYPQDIFSNGLKPAGGLIHLDALDGKSNSLDDSTEEVQSMDVSPVSKEELISIPEFSPVSEMIPGVSLDQNGTGNARALQDLLDFTGPPTFPKRSSENLSLDDCNKNLIEGFNSPGQETPLNTFC</sequence>
<dbReference type="EMBL" id="AK027409">
    <property type="protein sequence ID" value="BAB55093.1"/>
    <property type="molecule type" value="mRNA"/>
</dbReference>
<dbReference type="EMBL" id="AK098768">
    <property type="protein sequence ID" value="BAC05407.1"/>
    <property type="status" value="ALT_INIT"/>
    <property type="molecule type" value="mRNA"/>
</dbReference>
<dbReference type="EMBL" id="AK294788">
    <property type="protein sequence ID" value="BAH11884.1"/>
    <property type="molecule type" value="mRNA"/>
</dbReference>
<dbReference type="EMBL" id="AK296319">
    <property type="protein sequence ID" value="BAH12313.1"/>
    <property type="molecule type" value="mRNA"/>
</dbReference>
<dbReference type="EMBL" id="AL732366">
    <property type="status" value="NOT_ANNOTATED_CDS"/>
    <property type="molecule type" value="Genomic_DNA"/>
</dbReference>
<dbReference type="EMBL" id="BC037165">
    <property type="protein sequence ID" value="AAH37165.1"/>
    <property type="molecule type" value="mRNA"/>
</dbReference>
<dbReference type="EMBL" id="BC089400">
    <property type="protein sequence ID" value="AAH89400.1"/>
    <property type="molecule type" value="mRNA"/>
</dbReference>
<dbReference type="EMBL" id="BC136379">
    <property type="protein sequence ID" value="AAI36380.1"/>
    <property type="molecule type" value="mRNA"/>
</dbReference>
<dbReference type="CCDS" id="CCDS14195.1">
    <molecule id="Q96T17-1"/>
</dbReference>
<dbReference type="CCDS" id="CCDS55384.1">
    <molecule id="Q96T17-5"/>
</dbReference>
<dbReference type="CCDS" id="CCDS55385.1">
    <molecule id="Q96T17-4"/>
</dbReference>
<dbReference type="CCDS" id="CCDS55386.1">
    <molecule id="Q96T17-2"/>
</dbReference>
<dbReference type="RefSeq" id="NP_001161937.1">
    <molecule id="Q96T17-2"/>
    <property type="nucleotide sequence ID" value="NM_001168465.2"/>
</dbReference>
<dbReference type="RefSeq" id="NP_001161938.1">
    <molecule id="Q96T17-4"/>
    <property type="nucleotide sequence ID" value="NM_001168466.2"/>
</dbReference>
<dbReference type="RefSeq" id="NP_001161939.1">
    <molecule id="Q96T17-5"/>
    <property type="nucleotide sequence ID" value="NM_001168467.2"/>
</dbReference>
<dbReference type="RefSeq" id="NP_689993.2">
    <molecule id="Q96T17-1"/>
    <property type="nucleotide sequence ID" value="NM_152780.4"/>
</dbReference>
<dbReference type="SMR" id="Q96T17"/>
<dbReference type="BioGRID" id="129178">
    <property type="interactions" value="93"/>
</dbReference>
<dbReference type="FunCoup" id="Q96T17">
    <property type="interactions" value="447"/>
</dbReference>
<dbReference type="IntAct" id="Q96T17">
    <property type="interactions" value="43"/>
</dbReference>
<dbReference type="MINT" id="Q96T17"/>
<dbReference type="STRING" id="9606.ENSP00000368964"/>
<dbReference type="iPTMnet" id="Q96T17"/>
<dbReference type="PhosphoSitePlus" id="Q96T17"/>
<dbReference type="BioMuta" id="MAP7D2"/>
<dbReference type="DMDM" id="296434580"/>
<dbReference type="jPOST" id="Q96T17"/>
<dbReference type="MassIVE" id="Q96T17"/>
<dbReference type="PaxDb" id="9606-ENSP00000368964"/>
<dbReference type="PeptideAtlas" id="Q96T17"/>
<dbReference type="ProteomicsDB" id="12313"/>
<dbReference type="ProteomicsDB" id="78169">
    <molecule id="Q96T17-1"/>
</dbReference>
<dbReference type="ProteomicsDB" id="78170">
    <molecule id="Q96T17-2"/>
</dbReference>
<dbReference type="ProteomicsDB" id="78171">
    <molecule id="Q96T17-3"/>
</dbReference>
<dbReference type="ProteomicsDB" id="78172">
    <molecule id="Q96T17-4"/>
</dbReference>
<dbReference type="Pumba" id="Q96T17"/>
<dbReference type="Antibodypedia" id="63281">
    <property type="antibodies" value="12 antibodies from 7 providers"/>
</dbReference>
<dbReference type="DNASU" id="256714"/>
<dbReference type="Ensembl" id="ENST00000379643.10">
    <molecule id="Q96T17-2"/>
    <property type="protein sequence ID" value="ENSP00000368964.5"/>
    <property type="gene ID" value="ENSG00000184368.16"/>
</dbReference>
<dbReference type="Ensembl" id="ENST00000379651.7">
    <molecule id="Q96T17-1"/>
    <property type="protein sequence ID" value="ENSP00000368972.3"/>
    <property type="gene ID" value="ENSG00000184368.16"/>
</dbReference>
<dbReference type="Ensembl" id="ENST00000443379.7">
    <molecule id="Q96T17-4"/>
    <property type="protein sequence ID" value="ENSP00000388239.3"/>
    <property type="gene ID" value="ENSG00000184368.16"/>
</dbReference>
<dbReference type="Ensembl" id="ENST00000452324.3">
    <molecule id="Q96T17-5"/>
    <property type="protein sequence ID" value="ENSP00000413301.3"/>
    <property type="gene ID" value="ENSG00000184368.16"/>
</dbReference>
<dbReference type="GeneID" id="256714"/>
<dbReference type="KEGG" id="hsa:256714"/>
<dbReference type="MANE-Select" id="ENST00000379643.10">
    <molecule id="Q96T17-2"/>
    <property type="protein sequence ID" value="ENSP00000368964.5"/>
    <property type="RefSeq nucleotide sequence ID" value="NM_001168465.2"/>
    <property type="RefSeq protein sequence ID" value="NP_001161937.1"/>
</dbReference>
<dbReference type="UCSC" id="uc004czr.3">
    <molecule id="Q96T17-1"/>
    <property type="organism name" value="human"/>
</dbReference>
<dbReference type="AGR" id="HGNC:25899"/>
<dbReference type="CTD" id="256714"/>
<dbReference type="DisGeNET" id="256714"/>
<dbReference type="GeneCards" id="MAP7D2"/>
<dbReference type="HGNC" id="HGNC:25899">
    <property type="gene designation" value="MAP7D2"/>
</dbReference>
<dbReference type="HPA" id="ENSG00000184368">
    <property type="expression patterns" value="Tissue enhanced (brain, epididymis)"/>
</dbReference>
<dbReference type="MIM" id="301121">
    <property type="type" value="gene"/>
</dbReference>
<dbReference type="neXtProt" id="NX_Q96T17"/>
<dbReference type="OpenTargets" id="ENSG00000184368"/>
<dbReference type="PharmGKB" id="PA162394971"/>
<dbReference type="VEuPathDB" id="HostDB:ENSG00000184368"/>
<dbReference type="eggNOG" id="ENOG502QTSG">
    <property type="taxonomic scope" value="Eukaryota"/>
</dbReference>
<dbReference type="GeneTree" id="ENSGT00950000182941"/>
<dbReference type="HOGENOM" id="CLU_017315_1_0_1"/>
<dbReference type="InParanoid" id="Q96T17"/>
<dbReference type="OMA" id="QMEPPMS"/>
<dbReference type="OrthoDB" id="9950098at2759"/>
<dbReference type="PAN-GO" id="Q96T17">
    <property type="GO annotations" value="2 GO annotations based on evolutionary models"/>
</dbReference>
<dbReference type="PhylomeDB" id="Q96T17"/>
<dbReference type="TreeFam" id="TF332273"/>
<dbReference type="PathwayCommons" id="Q96T17"/>
<dbReference type="SignaLink" id="Q96T17"/>
<dbReference type="BioGRID-ORCS" id="256714">
    <property type="hits" value="13 hits in 766 CRISPR screens"/>
</dbReference>
<dbReference type="ChiTaRS" id="MAP7D2">
    <property type="organism name" value="human"/>
</dbReference>
<dbReference type="GenomeRNAi" id="256714"/>
<dbReference type="Pharos" id="Q96T17">
    <property type="development level" value="Tdark"/>
</dbReference>
<dbReference type="PRO" id="PR:Q96T17"/>
<dbReference type="Proteomes" id="UP000005640">
    <property type="component" value="Chromosome X"/>
</dbReference>
<dbReference type="RNAct" id="Q96T17">
    <property type="molecule type" value="protein"/>
</dbReference>
<dbReference type="Bgee" id="ENSG00000184368">
    <property type="expression patterns" value="Expressed in Brodmann (1909) area 23 and 135 other cell types or tissues"/>
</dbReference>
<dbReference type="GO" id="GO:0030424">
    <property type="term" value="C:axon"/>
    <property type="evidence" value="ECO:0007669"/>
    <property type="project" value="UniProtKB-SubCell"/>
</dbReference>
<dbReference type="GO" id="GO:0005813">
    <property type="term" value="C:centrosome"/>
    <property type="evidence" value="ECO:0000250"/>
    <property type="project" value="UniProtKB"/>
</dbReference>
<dbReference type="GO" id="GO:0005874">
    <property type="term" value="C:microtubule"/>
    <property type="evidence" value="ECO:0000250"/>
    <property type="project" value="UniProtKB"/>
</dbReference>
<dbReference type="GO" id="GO:0015630">
    <property type="term" value="C:microtubule cytoskeleton"/>
    <property type="evidence" value="ECO:0000318"/>
    <property type="project" value="GO_Central"/>
</dbReference>
<dbReference type="GO" id="GO:0030496">
    <property type="term" value="C:midbody"/>
    <property type="evidence" value="ECO:0000250"/>
    <property type="project" value="UniProtKB"/>
</dbReference>
<dbReference type="GO" id="GO:0043005">
    <property type="term" value="C:neuron projection"/>
    <property type="evidence" value="ECO:0000250"/>
    <property type="project" value="UniProtKB"/>
</dbReference>
<dbReference type="GO" id="GO:0019894">
    <property type="term" value="F:kinesin binding"/>
    <property type="evidence" value="ECO:0000250"/>
    <property type="project" value="UniProtKB"/>
</dbReference>
<dbReference type="GO" id="GO:0008017">
    <property type="term" value="F:microtubule binding"/>
    <property type="evidence" value="ECO:0000250"/>
    <property type="project" value="UniProtKB"/>
</dbReference>
<dbReference type="GO" id="GO:0061564">
    <property type="term" value="P:axon development"/>
    <property type="evidence" value="ECO:0000250"/>
    <property type="project" value="UniProtKB"/>
</dbReference>
<dbReference type="GO" id="GO:0000226">
    <property type="term" value="P:microtubule cytoskeleton organization"/>
    <property type="evidence" value="ECO:0000250"/>
    <property type="project" value="UniProtKB"/>
</dbReference>
<dbReference type="InterPro" id="IPR051483">
    <property type="entry name" value="MAP7_domain-containing"/>
</dbReference>
<dbReference type="InterPro" id="IPR008604">
    <property type="entry name" value="MAP7_fam"/>
</dbReference>
<dbReference type="PANTHER" id="PTHR15073:SF3">
    <property type="entry name" value="MAP7 DOMAIN-CONTAINING PROTEIN 2"/>
    <property type="match status" value="1"/>
</dbReference>
<dbReference type="PANTHER" id="PTHR15073">
    <property type="entry name" value="MICROTUBULE-ASSOCIATED PROTEIN"/>
    <property type="match status" value="1"/>
</dbReference>
<dbReference type="Pfam" id="PF05672">
    <property type="entry name" value="MAP7"/>
    <property type="match status" value="1"/>
</dbReference>
<name>MA7D2_HUMAN</name>
<protein>
    <recommendedName>
        <fullName>MAP7 domain-containing protein 2</fullName>
    </recommendedName>
</protein>
<proteinExistence type="evidence at protein level"/>
<feature type="chain" id="PRO_0000306809" description="MAP7 domain-containing protein 2">
    <location>
        <begin position="1"/>
        <end position="732"/>
    </location>
</feature>
<feature type="region of interest" description="Disordered" evidence="4">
    <location>
        <begin position="1"/>
        <end position="64"/>
    </location>
</feature>
<feature type="region of interest" description="Disordered" evidence="4">
    <location>
        <begin position="95"/>
        <end position="123"/>
    </location>
</feature>
<feature type="region of interest" description="Disordered" evidence="4">
    <location>
        <begin position="157"/>
        <end position="186"/>
    </location>
</feature>
<feature type="region of interest" description="Disordered" evidence="4">
    <location>
        <begin position="210"/>
        <end position="244"/>
    </location>
</feature>
<feature type="region of interest" description="Disordered" evidence="4">
    <location>
        <begin position="279"/>
        <end position="509"/>
    </location>
</feature>
<feature type="coiled-coil region" evidence="3">
    <location>
        <begin position="51"/>
        <end position="146"/>
    </location>
</feature>
<feature type="compositionally biased region" description="Gly residues" evidence="4">
    <location>
        <begin position="1"/>
        <end position="10"/>
    </location>
</feature>
<feature type="compositionally biased region" description="Basic and acidic residues" evidence="4">
    <location>
        <begin position="49"/>
        <end position="64"/>
    </location>
</feature>
<feature type="compositionally biased region" description="Basic and acidic residues" evidence="4">
    <location>
        <begin position="329"/>
        <end position="345"/>
    </location>
</feature>
<feature type="compositionally biased region" description="Low complexity" evidence="4">
    <location>
        <begin position="347"/>
        <end position="357"/>
    </location>
</feature>
<feature type="compositionally biased region" description="Basic and acidic residues" evidence="4">
    <location>
        <begin position="359"/>
        <end position="374"/>
    </location>
</feature>
<feature type="compositionally biased region" description="Low complexity" evidence="4">
    <location>
        <begin position="375"/>
        <end position="386"/>
    </location>
</feature>
<feature type="compositionally biased region" description="Basic and acidic residues" evidence="4">
    <location>
        <begin position="404"/>
        <end position="509"/>
    </location>
</feature>
<feature type="splice variant" id="VSP_044657" description="In isoform 5." evidence="8">
    <location>
        <begin position="1"/>
        <end position="44"/>
    </location>
</feature>
<feature type="splice variant" id="VSP_028490" description="In isoform 3." evidence="8">
    <original>D</original>
    <variation>DGESENTPPPPLGLAASTLPPDAGTTAAAAESTN</variation>
    <location>
        <position position="161"/>
    </location>
</feature>
<feature type="splice variant" id="VSP_043337" description="In isoform 4." evidence="8">
    <location>
        <begin position="162"/>
        <end position="206"/>
    </location>
</feature>
<feature type="splice variant" id="VSP_028491" description="In isoform 3." evidence="8">
    <original>RVFH</original>
    <variation>QAEG</variation>
    <location>
        <begin position="198"/>
        <end position="201"/>
    </location>
</feature>
<feature type="splice variant" id="VSP_028492" description="In isoform 2." evidence="9">
    <original>R</original>
    <variation>RAHHMHLSPMEAILVSRLLTPTQSSLARSRASVMLSGQANDS</variation>
    <location>
        <position position="198"/>
    </location>
</feature>
<feature type="splice variant" id="VSP_044658" description="In isoform 5." evidence="8">
    <location>
        <begin position="199"/>
        <end position="206"/>
    </location>
</feature>
<feature type="splice variant" id="VSP_028493" description="In isoform 3." evidence="8">
    <location>
        <begin position="202"/>
        <end position="732"/>
    </location>
</feature>
<feature type="sequence variant" id="VAR_035450" description="In a breast cancer sample; somatic mutation." evidence="6">
    <original>A</original>
    <variation>P</variation>
    <location>
        <position position="32"/>
    </location>
</feature>
<feature type="sequence variant" id="VAR_035313" description="In dbSNP:rs34519770." evidence="5">
    <original>N</original>
    <variation>S</variation>
    <location>
        <position position="182"/>
    </location>
</feature>
<feature type="sequence conflict" description="In Ref. 3; AAH89400." evidence="10" ref="3">
    <original>P</original>
    <variation>L</variation>
    <location>
        <position position="14"/>
    </location>
</feature>
<feature type="sequence conflict" description="In Ref. 1; BAB55093." evidence="10" ref="1">
    <original>L</original>
    <variation>V</variation>
    <location>
        <position position="423"/>
    </location>
</feature>
<feature type="sequence conflict" description="In Ref. 1; BAB55093." evidence="10" ref="1">
    <original>S</original>
    <variation>P</variation>
    <location>
        <position position="557"/>
    </location>
</feature>
<feature type="sequence conflict" description="In Ref. 1; BAH11884." evidence="10" ref="1">
    <original>N</original>
    <variation>S</variation>
    <location>
        <position position="590"/>
    </location>
</feature>
<feature type="modified residue" description="N-acetylmethionine" evidence="11">
    <location sequence="Q96T17-5">
        <position position="1"/>
    </location>
</feature>
<comment type="function">
    <text evidence="1 2">Microtubule-stabilizing protein that plays a role in the control of cell motility and neurite outgrowth via direct binding to the microtubule (By similarity). Acts as a critical cofactor for kinesin transport. In the proximal axon, regulates kinesin-1 family members, KIF5A, KIF5B and KIF5C recruitment to microtubules and contributes to kinesin-1-mediated transport in the axons (By similarity).</text>
</comment>
<comment type="subunit">
    <text evidence="2">Interacts (via N-terminus) with microtubules; facilitates microtubule stabilization. Interacts with kinesin-1 family members, KIF5A, KIF5B and KIF5C.</text>
</comment>
<comment type="subcellular location">
    <subcellularLocation>
        <location evidence="1">Cytoplasm</location>
        <location evidence="1">Cytoskeleton</location>
        <location evidence="1">Microtubule organizing center</location>
        <location evidence="1">Centrosome</location>
    </subcellularLocation>
    <subcellularLocation>
        <location evidence="1">Midbody</location>
    </subcellularLocation>
    <subcellularLocation>
        <location evidence="1">Cytoplasm</location>
        <location evidence="1">Cytoskeleton</location>
    </subcellularLocation>
    <subcellularLocation>
        <location evidence="1">Cell projection</location>
        <location evidence="1">Neuron projection</location>
    </subcellularLocation>
    <subcellularLocation>
        <location evidence="7">Cell projection</location>
        <location evidence="7">Axon</location>
    </subcellularLocation>
    <text evidence="1 7">Strongly localizes to the centrosome and partially on microtubule. During cytokinesis, accumulates at the midbody (By similarity). Accumulates to the proximal part of the axon (PubMed:30784582).</text>
</comment>
<comment type="alternative products">
    <event type="alternative splicing"/>
    <isoform>
        <id>Q96T17-1</id>
        <name>1</name>
        <sequence type="displayed"/>
    </isoform>
    <isoform>
        <id>Q96T17-2</id>
        <name>2</name>
        <sequence type="described" ref="VSP_028492"/>
    </isoform>
    <isoform>
        <id>Q96T17-3</id>
        <name>3</name>
        <sequence type="described" ref="VSP_028490 VSP_028491 VSP_028493"/>
    </isoform>
    <isoform>
        <id>Q96T17-4</id>
        <name>4</name>
        <sequence type="described" ref="VSP_043337"/>
    </isoform>
    <isoform>
        <id>Q96T17-5</id>
        <name>5</name>
        <sequence type="described" ref="VSP_044657 VSP_044658"/>
    </isoform>
</comment>
<comment type="similarity">
    <text evidence="10">Belongs to the MAP7 family.</text>
</comment>
<comment type="sequence caution" evidence="10">
    <conflict type="erroneous initiation">
        <sequence resource="EMBL-CDS" id="BAC05407"/>
    </conflict>
    <text>Truncated N-terminus.</text>
</comment>
<accession>Q96T17</accession>
<accession>B7Z2J8</accession>
<accession>B7Z3S7</accession>
<accession>B9EGC7</accession>
<accession>C9JMA4</accession>
<accession>C9JYW0</accession>
<accession>Q5EBN1</accession>
<accession>Q5JPS7</accession>
<accession>Q6PIC7</accession>
<accession>Q8N792</accession>
<keyword id="KW-0007">Acetylation</keyword>
<keyword id="KW-0025">Alternative splicing</keyword>
<keyword id="KW-0966">Cell projection</keyword>
<keyword id="KW-0175">Coiled coil</keyword>
<keyword id="KW-0963">Cytoplasm</keyword>
<keyword id="KW-0206">Cytoskeleton</keyword>
<keyword id="KW-1267">Proteomics identification</keyword>
<keyword id="KW-1185">Reference proteome</keyword>